<name>TRPA_SINMW</name>
<dbReference type="EC" id="4.2.1.20" evidence="1"/>
<dbReference type="EMBL" id="CP000738">
    <property type="protein sequence ID" value="ABR62062.1"/>
    <property type="molecule type" value="Genomic_DNA"/>
</dbReference>
<dbReference type="RefSeq" id="WP_012067443.1">
    <property type="nucleotide sequence ID" value="NC_009636.1"/>
</dbReference>
<dbReference type="RefSeq" id="YP_001328897.1">
    <property type="nucleotide sequence ID" value="NC_009636.1"/>
</dbReference>
<dbReference type="SMR" id="A6UEI2"/>
<dbReference type="STRING" id="366394.Smed_3238"/>
<dbReference type="GeneID" id="61610820"/>
<dbReference type="KEGG" id="smd:Smed_3238"/>
<dbReference type="PATRIC" id="fig|366394.8.peg.6476"/>
<dbReference type="eggNOG" id="COG0159">
    <property type="taxonomic scope" value="Bacteria"/>
</dbReference>
<dbReference type="HOGENOM" id="CLU_016734_0_0_5"/>
<dbReference type="OrthoDB" id="9804578at2"/>
<dbReference type="UniPathway" id="UPA00035">
    <property type="reaction ID" value="UER00044"/>
</dbReference>
<dbReference type="Proteomes" id="UP000001108">
    <property type="component" value="Chromosome"/>
</dbReference>
<dbReference type="GO" id="GO:0005829">
    <property type="term" value="C:cytosol"/>
    <property type="evidence" value="ECO:0007669"/>
    <property type="project" value="TreeGrafter"/>
</dbReference>
<dbReference type="GO" id="GO:0004834">
    <property type="term" value="F:tryptophan synthase activity"/>
    <property type="evidence" value="ECO:0007669"/>
    <property type="project" value="UniProtKB-UniRule"/>
</dbReference>
<dbReference type="CDD" id="cd04724">
    <property type="entry name" value="Tryptophan_synthase_alpha"/>
    <property type="match status" value="1"/>
</dbReference>
<dbReference type="FunFam" id="3.20.20.70:FF:000037">
    <property type="entry name" value="Tryptophan synthase alpha chain"/>
    <property type="match status" value="1"/>
</dbReference>
<dbReference type="Gene3D" id="3.20.20.70">
    <property type="entry name" value="Aldolase class I"/>
    <property type="match status" value="1"/>
</dbReference>
<dbReference type="HAMAP" id="MF_00131">
    <property type="entry name" value="Trp_synth_alpha"/>
    <property type="match status" value="1"/>
</dbReference>
<dbReference type="InterPro" id="IPR013785">
    <property type="entry name" value="Aldolase_TIM"/>
</dbReference>
<dbReference type="InterPro" id="IPR011060">
    <property type="entry name" value="RibuloseP-bd_barrel"/>
</dbReference>
<dbReference type="InterPro" id="IPR018204">
    <property type="entry name" value="Trp_synthase_alpha_AS"/>
</dbReference>
<dbReference type="InterPro" id="IPR002028">
    <property type="entry name" value="Trp_synthase_suA"/>
</dbReference>
<dbReference type="NCBIfam" id="TIGR00262">
    <property type="entry name" value="trpA"/>
    <property type="match status" value="1"/>
</dbReference>
<dbReference type="PANTHER" id="PTHR43406:SF1">
    <property type="entry name" value="TRYPTOPHAN SYNTHASE ALPHA CHAIN, CHLOROPLASTIC"/>
    <property type="match status" value="1"/>
</dbReference>
<dbReference type="PANTHER" id="PTHR43406">
    <property type="entry name" value="TRYPTOPHAN SYNTHASE, ALPHA CHAIN"/>
    <property type="match status" value="1"/>
</dbReference>
<dbReference type="Pfam" id="PF00290">
    <property type="entry name" value="Trp_syntA"/>
    <property type="match status" value="1"/>
</dbReference>
<dbReference type="SUPFAM" id="SSF51366">
    <property type="entry name" value="Ribulose-phoshate binding barrel"/>
    <property type="match status" value="1"/>
</dbReference>
<dbReference type="PROSITE" id="PS00167">
    <property type="entry name" value="TRP_SYNTHASE_ALPHA"/>
    <property type="match status" value="1"/>
</dbReference>
<comment type="function">
    <text evidence="1">The alpha subunit is responsible for the aldol cleavage of indoleglycerol phosphate to indole and glyceraldehyde 3-phosphate.</text>
</comment>
<comment type="catalytic activity">
    <reaction evidence="1">
        <text>(1S,2R)-1-C-(indol-3-yl)glycerol 3-phosphate + L-serine = D-glyceraldehyde 3-phosphate + L-tryptophan + H2O</text>
        <dbReference type="Rhea" id="RHEA:10532"/>
        <dbReference type="ChEBI" id="CHEBI:15377"/>
        <dbReference type="ChEBI" id="CHEBI:33384"/>
        <dbReference type="ChEBI" id="CHEBI:57912"/>
        <dbReference type="ChEBI" id="CHEBI:58866"/>
        <dbReference type="ChEBI" id="CHEBI:59776"/>
        <dbReference type="EC" id="4.2.1.20"/>
    </reaction>
</comment>
<comment type="pathway">
    <text evidence="1">Amino-acid biosynthesis; L-tryptophan biosynthesis; L-tryptophan from chorismate: step 5/5.</text>
</comment>
<comment type="subunit">
    <text evidence="1">Tetramer of two alpha and two beta chains.</text>
</comment>
<comment type="similarity">
    <text evidence="1">Belongs to the TrpA family.</text>
</comment>
<accession>A6UEI2</accession>
<feature type="chain" id="PRO_1000018284" description="Tryptophan synthase alpha chain">
    <location>
        <begin position="1"/>
        <end position="279"/>
    </location>
</feature>
<feature type="active site" description="Proton acceptor" evidence="1">
    <location>
        <position position="50"/>
    </location>
</feature>
<feature type="active site" description="Proton acceptor" evidence="1">
    <location>
        <position position="61"/>
    </location>
</feature>
<protein>
    <recommendedName>
        <fullName evidence="1">Tryptophan synthase alpha chain</fullName>
        <ecNumber evidence="1">4.2.1.20</ecNumber>
    </recommendedName>
</protein>
<gene>
    <name evidence="1" type="primary">trpA</name>
    <name type="ordered locus">Smed_3238</name>
</gene>
<keyword id="KW-0028">Amino-acid biosynthesis</keyword>
<keyword id="KW-0057">Aromatic amino acid biosynthesis</keyword>
<keyword id="KW-0456">Lyase</keyword>
<keyword id="KW-0822">Tryptophan biosynthesis</keyword>
<reference key="1">
    <citation type="submission" date="2007-06" db="EMBL/GenBank/DDBJ databases">
        <title>Complete sequence of Sinorhizobium medicae WSM419 chromosome.</title>
        <authorList>
            <consortium name="US DOE Joint Genome Institute"/>
            <person name="Copeland A."/>
            <person name="Lucas S."/>
            <person name="Lapidus A."/>
            <person name="Barry K."/>
            <person name="Glavina del Rio T."/>
            <person name="Dalin E."/>
            <person name="Tice H."/>
            <person name="Pitluck S."/>
            <person name="Chain P."/>
            <person name="Malfatti S."/>
            <person name="Shin M."/>
            <person name="Vergez L."/>
            <person name="Schmutz J."/>
            <person name="Larimer F."/>
            <person name="Land M."/>
            <person name="Hauser L."/>
            <person name="Kyrpides N."/>
            <person name="Mikhailova N."/>
            <person name="Reeve W.G."/>
            <person name="Richardson P."/>
        </authorList>
    </citation>
    <scope>NUCLEOTIDE SEQUENCE [LARGE SCALE GENOMIC DNA]</scope>
    <source>
        <strain>WSM419</strain>
    </source>
</reference>
<sequence length="279" mass="29339">MTARMEQRFADVAAEGRPVLVTYFMGGDPDFDTSLAIMKALQQAGADIIELGVPFSDPMADGPAIQLAGQRALKAGQTLAKTLELARRFRADDQRTPIVLMGYYNPIYIYGVERFLTDALEAGVDGMIVVDLPPEMDDELCIPALAKGISFIRLATPTTDDRRLPKVLENTSGFVYYVSMTGITGSALPDTSLIAGAVARIKAHTSLPVCVGFGVKTADHARAIGATADGVVVGTAIVNQIASSLTEEGRATEATVPGVEALVRGLAAGVRAARLAAAE</sequence>
<organism>
    <name type="scientific">Sinorhizobium medicae (strain WSM419)</name>
    <name type="common">Ensifer medicae</name>
    <dbReference type="NCBI Taxonomy" id="366394"/>
    <lineage>
        <taxon>Bacteria</taxon>
        <taxon>Pseudomonadati</taxon>
        <taxon>Pseudomonadota</taxon>
        <taxon>Alphaproteobacteria</taxon>
        <taxon>Hyphomicrobiales</taxon>
        <taxon>Rhizobiaceae</taxon>
        <taxon>Sinorhizobium/Ensifer group</taxon>
        <taxon>Sinorhizobium</taxon>
    </lineage>
</organism>
<evidence type="ECO:0000255" key="1">
    <source>
        <dbReference type="HAMAP-Rule" id="MF_00131"/>
    </source>
</evidence>
<proteinExistence type="inferred from homology"/>